<accession>B0KN41</accession>
<feature type="chain" id="PRO_1000126702" description="Large ribosomal subunit protein bL31">
    <location>
        <begin position="1"/>
        <end position="71"/>
    </location>
</feature>
<feature type="binding site" evidence="1">
    <location>
        <position position="16"/>
    </location>
    <ligand>
        <name>Zn(2+)</name>
        <dbReference type="ChEBI" id="CHEBI:29105"/>
    </ligand>
</feature>
<feature type="binding site" evidence="1">
    <location>
        <position position="18"/>
    </location>
    <ligand>
        <name>Zn(2+)</name>
        <dbReference type="ChEBI" id="CHEBI:29105"/>
    </ligand>
</feature>
<feature type="binding site" evidence="1">
    <location>
        <position position="37"/>
    </location>
    <ligand>
        <name>Zn(2+)</name>
        <dbReference type="ChEBI" id="CHEBI:29105"/>
    </ligand>
</feature>
<feature type="binding site" evidence="1">
    <location>
        <position position="40"/>
    </location>
    <ligand>
        <name>Zn(2+)</name>
        <dbReference type="ChEBI" id="CHEBI:29105"/>
    </ligand>
</feature>
<reference key="1">
    <citation type="submission" date="2008-01" db="EMBL/GenBank/DDBJ databases">
        <title>Complete sequence of Pseudomonas putida GB-1.</title>
        <authorList>
            <consortium name="US DOE Joint Genome Institute"/>
            <person name="Copeland A."/>
            <person name="Lucas S."/>
            <person name="Lapidus A."/>
            <person name="Barry K."/>
            <person name="Glavina del Rio T."/>
            <person name="Dalin E."/>
            <person name="Tice H."/>
            <person name="Pitluck S."/>
            <person name="Bruce D."/>
            <person name="Goodwin L."/>
            <person name="Chertkov O."/>
            <person name="Brettin T."/>
            <person name="Detter J.C."/>
            <person name="Han C."/>
            <person name="Kuske C.R."/>
            <person name="Schmutz J."/>
            <person name="Larimer F."/>
            <person name="Land M."/>
            <person name="Hauser L."/>
            <person name="Kyrpides N."/>
            <person name="Kim E."/>
            <person name="McCarthy J.K."/>
            <person name="Richardson P."/>
        </authorList>
    </citation>
    <scope>NUCLEOTIDE SEQUENCE [LARGE SCALE GENOMIC DNA]</scope>
    <source>
        <strain>GB-1</strain>
    </source>
</reference>
<proteinExistence type="inferred from homology"/>
<gene>
    <name evidence="1" type="primary">rpmE</name>
    <name type="ordered locus">PputGB1_5137</name>
</gene>
<organism>
    <name type="scientific">Pseudomonas putida (strain GB-1)</name>
    <dbReference type="NCBI Taxonomy" id="76869"/>
    <lineage>
        <taxon>Bacteria</taxon>
        <taxon>Pseudomonadati</taxon>
        <taxon>Pseudomonadota</taxon>
        <taxon>Gammaproteobacteria</taxon>
        <taxon>Pseudomonadales</taxon>
        <taxon>Pseudomonadaceae</taxon>
        <taxon>Pseudomonas</taxon>
    </lineage>
</organism>
<dbReference type="EMBL" id="CP000926">
    <property type="protein sequence ID" value="ABZ01022.1"/>
    <property type="molecule type" value="Genomic_DNA"/>
</dbReference>
<dbReference type="RefSeq" id="WP_012274639.1">
    <property type="nucleotide sequence ID" value="NC_010322.1"/>
</dbReference>
<dbReference type="SMR" id="B0KN41"/>
<dbReference type="GeneID" id="83672492"/>
<dbReference type="KEGG" id="ppg:PputGB1_5137"/>
<dbReference type="eggNOG" id="COG0254">
    <property type="taxonomic scope" value="Bacteria"/>
</dbReference>
<dbReference type="HOGENOM" id="CLU_114306_4_0_6"/>
<dbReference type="Proteomes" id="UP000002157">
    <property type="component" value="Chromosome"/>
</dbReference>
<dbReference type="GO" id="GO:1990904">
    <property type="term" value="C:ribonucleoprotein complex"/>
    <property type="evidence" value="ECO:0007669"/>
    <property type="project" value="UniProtKB-KW"/>
</dbReference>
<dbReference type="GO" id="GO:0005840">
    <property type="term" value="C:ribosome"/>
    <property type="evidence" value="ECO:0007669"/>
    <property type="project" value="UniProtKB-KW"/>
</dbReference>
<dbReference type="GO" id="GO:0046872">
    <property type="term" value="F:metal ion binding"/>
    <property type="evidence" value="ECO:0007669"/>
    <property type="project" value="UniProtKB-KW"/>
</dbReference>
<dbReference type="GO" id="GO:0019843">
    <property type="term" value="F:rRNA binding"/>
    <property type="evidence" value="ECO:0007669"/>
    <property type="project" value="UniProtKB-KW"/>
</dbReference>
<dbReference type="GO" id="GO:0003735">
    <property type="term" value="F:structural constituent of ribosome"/>
    <property type="evidence" value="ECO:0007669"/>
    <property type="project" value="InterPro"/>
</dbReference>
<dbReference type="GO" id="GO:0006412">
    <property type="term" value="P:translation"/>
    <property type="evidence" value="ECO:0007669"/>
    <property type="project" value="UniProtKB-UniRule"/>
</dbReference>
<dbReference type="Gene3D" id="4.10.830.30">
    <property type="entry name" value="Ribosomal protein L31"/>
    <property type="match status" value="1"/>
</dbReference>
<dbReference type="HAMAP" id="MF_00501">
    <property type="entry name" value="Ribosomal_bL31_1"/>
    <property type="match status" value="1"/>
</dbReference>
<dbReference type="InterPro" id="IPR034704">
    <property type="entry name" value="Ribosomal_bL28/bL31-like_sf"/>
</dbReference>
<dbReference type="InterPro" id="IPR002150">
    <property type="entry name" value="Ribosomal_bL31"/>
</dbReference>
<dbReference type="InterPro" id="IPR027491">
    <property type="entry name" value="Ribosomal_bL31_A"/>
</dbReference>
<dbReference type="InterPro" id="IPR042105">
    <property type="entry name" value="Ribosomal_bL31_sf"/>
</dbReference>
<dbReference type="NCBIfam" id="TIGR00105">
    <property type="entry name" value="L31"/>
    <property type="match status" value="1"/>
</dbReference>
<dbReference type="NCBIfam" id="NF000612">
    <property type="entry name" value="PRK00019.1"/>
    <property type="match status" value="1"/>
</dbReference>
<dbReference type="NCBIfam" id="NF001809">
    <property type="entry name" value="PRK00528.1"/>
    <property type="match status" value="1"/>
</dbReference>
<dbReference type="PANTHER" id="PTHR33280">
    <property type="entry name" value="50S RIBOSOMAL PROTEIN L31, CHLOROPLASTIC"/>
    <property type="match status" value="1"/>
</dbReference>
<dbReference type="PANTHER" id="PTHR33280:SF6">
    <property type="entry name" value="LARGE RIBOSOMAL SUBUNIT PROTEIN BL31A"/>
    <property type="match status" value="1"/>
</dbReference>
<dbReference type="Pfam" id="PF01197">
    <property type="entry name" value="Ribosomal_L31"/>
    <property type="match status" value="1"/>
</dbReference>
<dbReference type="PRINTS" id="PR01249">
    <property type="entry name" value="RIBOSOMALL31"/>
</dbReference>
<dbReference type="SUPFAM" id="SSF143800">
    <property type="entry name" value="L28p-like"/>
    <property type="match status" value="1"/>
</dbReference>
<dbReference type="PROSITE" id="PS01143">
    <property type="entry name" value="RIBOSOMAL_L31"/>
    <property type="match status" value="1"/>
</dbReference>
<protein>
    <recommendedName>
        <fullName evidence="1">Large ribosomal subunit protein bL31</fullName>
    </recommendedName>
    <alternativeName>
        <fullName evidence="2">50S ribosomal protein L31</fullName>
    </alternativeName>
</protein>
<name>RL31_PSEPG</name>
<evidence type="ECO:0000255" key="1">
    <source>
        <dbReference type="HAMAP-Rule" id="MF_00501"/>
    </source>
</evidence>
<evidence type="ECO:0000305" key="2"/>
<sequence>MKEGIHPNYEVVAVTCSCGNKFETRSTLGNVLSIDVCNLCHPFYTGKQKVLDTGGRVQKFADRFGMFGTKK</sequence>
<comment type="function">
    <text evidence="1">Binds the 23S rRNA.</text>
</comment>
<comment type="cofactor">
    <cofactor evidence="1">
        <name>Zn(2+)</name>
        <dbReference type="ChEBI" id="CHEBI:29105"/>
    </cofactor>
    <text evidence="1">Binds 1 zinc ion per subunit.</text>
</comment>
<comment type="subunit">
    <text evidence="1">Part of the 50S ribosomal subunit.</text>
</comment>
<comment type="similarity">
    <text evidence="1">Belongs to the bacterial ribosomal protein bL31 family. Type A subfamily.</text>
</comment>
<keyword id="KW-0479">Metal-binding</keyword>
<keyword id="KW-0687">Ribonucleoprotein</keyword>
<keyword id="KW-0689">Ribosomal protein</keyword>
<keyword id="KW-0694">RNA-binding</keyword>
<keyword id="KW-0699">rRNA-binding</keyword>
<keyword id="KW-0862">Zinc</keyword>